<proteinExistence type="evidence at transcript level"/>
<organism>
    <name type="scientific">Sus scrofa</name>
    <name type="common">Pig</name>
    <dbReference type="NCBI Taxonomy" id="9823"/>
    <lineage>
        <taxon>Eukaryota</taxon>
        <taxon>Metazoa</taxon>
        <taxon>Chordata</taxon>
        <taxon>Craniata</taxon>
        <taxon>Vertebrata</taxon>
        <taxon>Euteleostomi</taxon>
        <taxon>Mammalia</taxon>
        <taxon>Eutheria</taxon>
        <taxon>Laurasiatheria</taxon>
        <taxon>Artiodactyla</taxon>
        <taxon>Suina</taxon>
        <taxon>Suidae</taxon>
        <taxon>Sus</taxon>
    </lineage>
</organism>
<name>PIT1_PIG</name>
<comment type="function">
    <text evidence="1">Transcription factor involved in the specification of the lactotrope, somatotrope, and thyrotrope phenotypes in the developing anterior pituitary. Activates growth hormone and prolactin genes. Specifically binds to the consensus sequence 5'-TAAAT-3'.</text>
</comment>
<comment type="subunit">
    <text evidence="1">Interacts with PITX1. Interacts with LHX3. Interacts with ELK1.</text>
</comment>
<comment type="subcellular location">
    <subcellularLocation>
        <location evidence="1">Nucleus</location>
    </subcellularLocation>
</comment>
<comment type="domain">
    <text evidence="1">The 9aaTAD motif is a transactivation domain present in a large number of yeast and animal transcription factors.</text>
</comment>
<comment type="similarity">
    <text evidence="4">Belongs to the POU transcription factor family. Class-1 subfamily.</text>
</comment>
<dbReference type="EMBL" id="Y13617">
    <property type="protein sequence ID" value="CAA73939.1"/>
    <property type="molecule type" value="mRNA"/>
</dbReference>
<dbReference type="EMBL" id="AF016251">
    <property type="protein sequence ID" value="AAB65789.2"/>
    <property type="molecule type" value="mRNA"/>
</dbReference>
<dbReference type="EMBL" id="L03841">
    <property type="protein sequence ID" value="AAA31108.1"/>
    <property type="molecule type" value="mRNA"/>
</dbReference>
<dbReference type="RefSeq" id="NP_999328.1">
    <property type="nucleotide sequence ID" value="NM_214163.1"/>
</dbReference>
<dbReference type="SMR" id="Q04788"/>
<dbReference type="FunCoup" id="Q04788">
    <property type="interactions" value="28"/>
</dbReference>
<dbReference type="STRING" id="9823.ENSSSCP00000012779"/>
<dbReference type="GlyGen" id="Q04788">
    <property type="glycosylation" value="1 site"/>
</dbReference>
<dbReference type="PaxDb" id="9823-ENSSSCP00000012779"/>
<dbReference type="GeneID" id="397325"/>
<dbReference type="KEGG" id="ssc:397325"/>
<dbReference type="CTD" id="5449"/>
<dbReference type="eggNOG" id="KOG3802">
    <property type="taxonomic scope" value="Eukaryota"/>
</dbReference>
<dbReference type="InParanoid" id="Q04788"/>
<dbReference type="OrthoDB" id="6358449at2759"/>
<dbReference type="Proteomes" id="UP000008227">
    <property type="component" value="Unplaced"/>
</dbReference>
<dbReference type="Proteomes" id="UP000314985">
    <property type="component" value="Unplaced"/>
</dbReference>
<dbReference type="Proteomes" id="UP000694570">
    <property type="component" value="Unplaced"/>
</dbReference>
<dbReference type="Proteomes" id="UP000694571">
    <property type="component" value="Unplaced"/>
</dbReference>
<dbReference type="Proteomes" id="UP000694720">
    <property type="component" value="Unplaced"/>
</dbReference>
<dbReference type="Proteomes" id="UP000694722">
    <property type="component" value="Unplaced"/>
</dbReference>
<dbReference type="Proteomes" id="UP000694723">
    <property type="component" value="Unplaced"/>
</dbReference>
<dbReference type="Proteomes" id="UP000694724">
    <property type="component" value="Unplaced"/>
</dbReference>
<dbReference type="Proteomes" id="UP000694725">
    <property type="component" value="Unplaced"/>
</dbReference>
<dbReference type="Proteomes" id="UP000694726">
    <property type="component" value="Unplaced"/>
</dbReference>
<dbReference type="Proteomes" id="UP000694727">
    <property type="component" value="Unplaced"/>
</dbReference>
<dbReference type="Proteomes" id="UP000694728">
    <property type="component" value="Unplaced"/>
</dbReference>
<dbReference type="GO" id="GO:0005634">
    <property type="term" value="C:nucleus"/>
    <property type="evidence" value="ECO:0000250"/>
    <property type="project" value="UniProtKB"/>
</dbReference>
<dbReference type="GO" id="GO:0000981">
    <property type="term" value="F:DNA-binding transcription factor activity, RNA polymerase II-specific"/>
    <property type="evidence" value="ECO:0000250"/>
    <property type="project" value="UniProtKB"/>
</dbReference>
<dbReference type="GO" id="GO:0000978">
    <property type="term" value="F:RNA polymerase II cis-regulatory region sequence-specific DNA binding"/>
    <property type="evidence" value="ECO:0000318"/>
    <property type="project" value="GO_Central"/>
</dbReference>
<dbReference type="GO" id="GO:0045944">
    <property type="term" value="P:positive regulation of transcription by RNA polymerase II"/>
    <property type="evidence" value="ECO:0000250"/>
    <property type="project" value="UniProtKB"/>
</dbReference>
<dbReference type="GO" id="GO:0006357">
    <property type="term" value="P:regulation of transcription by RNA polymerase II"/>
    <property type="evidence" value="ECO:0000318"/>
    <property type="project" value="GO_Central"/>
</dbReference>
<dbReference type="CDD" id="cd00086">
    <property type="entry name" value="homeodomain"/>
    <property type="match status" value="1"/>
</dbReference>
<dbReference type="FunFam" id="1.10.10.60:FF:000150">
    <property type="entry name" value="POU domain protein"/>
    <property type="match status" value="1"/>
</dbReference>
<dbReference type="FunFam" id="1.10.260.40:FF:000007">
    <property type="entry name" value="POU domain protein"/>
    <property type="match status" value="1"/>
</dbReference>
<dbReference type="Gene3D" id="1.10.10.60">
    <property type="entry name" value="Homeodomain-like"/>
    <property type="match status" value="1"/>
</dbReference>
<dbReference type="Gene3D" id="1.10.260.40">
    <property type="entry name" value="lambda repressor-like DNA-binding domains"/>
    <property type="match status" value="1"/>
</dbReference>
<dbReference type="InterPro" id="IPR001356">
    <property type="entry name" value="HD"/>
</dbReference>
<dbReference type="InterPro" id="IPR017970">
    <property type="entry name" value="Homeobox_CS"/>
</dbReference>
<dbReference type="InterPro" id="IPR009057">
    <property type="entry name" value="Homeodomain-like_sf"/>
</dbReference>
<dbReference type="InterPro" id="IPR010982">
    <property type="entry name" value="Lambda_DNA-bd_dom_sf"/>
</dbReference>
<dbReference type="InterPro" id="IPR013847">
    <property type="entry name" value="POU"/>
</dbReference>
<dbReference type="InterPro" id="IPR000327">
    <property type="entry name" value="POU_dom"/>
</dbReference>
<dbReference type="InterPro" id="IPR050255">
    <property type="entry name" value="POU_domain_TF"/>
</dbReference>
<dbReference type="PANTHER" id="PTHR11636:SF84">
    <property type="entry name" value="NETRIN-1-RELATED"/>
    <property type="match status" value="1"/>
</dbReference>
<dbReference type="PANTHER" id="PTHR11636">
    <property type="entry name" value="POU DOMAIN"/>
    <property type="match status" value="1"/>
</dbReference>
<dbReference type="Pfam" id="PF00046">
    <property type="entry name" value="Homeodomain"/>
    <property type="match status" value="1"/>
</dbReference>
<dbReference type="Pfam" id="PF00157">
    <property type="entry name" value="Pou"/>
    <property type="match status" value="1"/>
</dbReference>
<dbReference type="PRINTS" id="PR00028">
    <property type="entry name" value="POUDOMAIN"/>
</dbReference>
<dbReference type="SMART" id="SM00389">
    <property type="entry name" value="HOX"/>
    <property type="match status" value="1"/>
</dbReference>
<dbReference type="SMART" id="SM00352">
    <property type="entry name" value="POU"/>
    <property type="match status" value="1"/>
</dbReference>
<dbReference type="SUPFAM" id="SSF46689">
    <property type="entry name" value="Homeodomain-like"/>
    <property type="match status" value="1"/>
</dbReference>
<dbReference type="SUPFAM" id="SSF47413">
    <property type="entry name" value="lambda repressor-like DNA-binding domains"/>
    <property type="match status" value="1"/>
</dbReference>
<dbReference type="PROSITE" id="PS00027">
    <property type="entry name" value="HOMEOBOX_1"/>
    <property type="match status" value="1"/>
</dbReference>
<dbReference type="PROSITE" id="PS50071">
    <property type="entry name" value="HOMEOBOX_2"/>
    <property type="match status" value="1"/>
</dbReference>
<dbReference type="PROSITE" id="PS00035">
    <property type="entry name" value="POU_1"/>
    <property type="match status" value="1"/>
</dbReference>
<dbReference type="PROSITE" id="PS00465">
    <property type="entry name" value="POU_2"/>
    <property type="match status" value="1"/>
</dbReference>
<dbReference type="PROSITE" id="PS51179">
    <property type="entry name" value="POU_3"/>
    <property type="match status" value="1"/>
</dbReference>
<gene>
    <name type="primary">POU1F1</name>
    <name type="synonym">PIT-1</name>
    <name type="synonym">PIT1</name>
</gene>
<protein>
    <recommendedName>
        <fullName>Pituitary-specific positive transcription factor 1</fullName>
        <shortName>PIT-1</shortName>
    </recommendedName>
    <alternativeName>
        <fullName>Growth hormone factor 1</fullName>
        <shortName>GHF-1</shortName>
    </alternativeName>
</protein>
<accession>Q04788</accession>
<accession>O18807</accession>
<accession>O46410</accession>
<reference key="1">
    <citation type="submission" date="1997-06" db="EMBL/GenBank/DDBJ databases">
        <title>Molecular cloning of pig (Sus scrofa) pituitary transcription factor GHF-1/Pit-1.</title>
        <authorList>
            <person name="Vila V."/>
            <person name="Sanchez M.P."/>
            <person name="Malagon M.M."/>
            <person name="Gracia F."/>
            <person name="Castrillo J.-L."/>
        </authorList>
    </citation>
    <scope>NUCLEOTIDE SEQUENCE [MRNA]</scope>
    <source>
        <tissue>Pituitary</tissue>
    </source>
</reference>
<reference key="2">
    <citation type="submission" date="1999-12" db="EMBL/GenBank/DDBJ databases">
        <title>Cloning of the full length pig PIT-1 cDNA and its alternative transcripts, and functional studies of their encoded proteins.</title>
        <authorList>
            <person name="Yu T.-P."/>
            <person name="Sun H.S."/>
            <person name="Rothschild M.F."/>
            <person name="Tuggle C.K."/>
        </authorList>
    </citation>
    <scope>NUCLEOTIDE SEQUENCE [MRNA]</scope>
</reference>
<reference key="3">
    <citation type="journal article" date="1993" name="Anim. Genet.">
        <title>Cloning and restriction fragment length polymorphism analysis of a cDNA for swine PIT-1, a gene controlling growth hormone expression.</title>
        <authorList>
            <person name="Tuggle C.K."/>
            <person name="Yu T.-P."/>
            <person name="Helm J."/>
            <person name="Rothschild M.F."/>
        </authorList>
    </citation>
    <scope>NUCLEOTIDE SEQUENCE [MRNA] OF 139-267</scope>
    <source>
        <strain>Duroc</strain>
        <tissue>Brain cortex</tissue>
        <tissue>Pituitary</tissue>
    </source>
</reference>
<keyword id="KW-0010">Activator</keyword>
<keyword id="KW-0238">DNA-binding</keyword>
<keyword id="KW-0371">Homeobox</keyword>
<keyword id="KW-0539">Nucleus</keyword>
<keyword id="KW-1185">Reference proteome</keyword>
<keyword id="KW-0804">Transcription</keyword>
<keyword id="KW-0805">Transcription regulation</keyword>
<evidence type="ECO:0000250" key="1">
    <source>
        <dbReference type="UniProtKB" id="P28069"/>
    </source>
</evidence>
<evidence type="ECO:0000255" key="2">
    <source>
        <dbReference type="PROSITE-ProRule" id="PRU00108"/>
    </source>
</evidence>
<evidence type="ECO:0000255" key="3">
    <source>
        <dbReference type="PROSITE-ProRule" id="PRU00530"/>
    </source>
</evidence>
<evidence type="ECO:0000305" key="4"/>
<feature type="chain" id="PRO_0000100700" description="Pituitary-specific positive transcription factor 1">
    <location>
        <begin position="1"/>
        <end position="291"/>
    </location>
</feature>
<feature type="domain" description="POU-specific" evidence="3">
    <location>
        <begin position="124"/>
        <end position="198"/>
    </location>
</feature>
<feature type="DNA-binding region" description="Homeobox" evidence="2">
    <location>
        <begin position="214"/>
        <end position="273"/>
    </location>
</feature>
<feature type="short sequence motif" description="9aaTAD" evidence="1">
    <location>
        <begin position="5"/>
        <end position="13"/>
    </location>
</feature>
<feature type="sequence conflict" description="In Ref. 2; AAB65789." evidence="4" ref="2">
    <original>P</original>
    <variation>S</variation>
    <location>
        <position position="64"/>
    </location>
</feature>
<feature type="sequence conflict" description="In Ref. 2; AAB65789." evidence="4" ref="2">
    <original>Y</original>
    <variation>H</variation>
    <location>
        <position position="94"/>
    </location>
</feature>
<feature type="sequence conflict" description="In Ref. 2; AAB65789." evidence="4" ref="2">
    <original>P</original>
    <variation>A</variation>
    <location>
        <position position="136"/>
    </location>
</feature>
<feature type="sequence conflict" description="In Ref. 1; CAA73939." evidence="4" ref="1">
    <original>V</original>
    <variation>A</variation>
    <location>
        <position position="141"/>
    </location>
</feature>
<feature type="sequence conflict" description="In Ref. 3; AAA31108." evidence="4" ref="3">
    <original>I</original>
    <variation>M</variation>
    <location>
        <position position="144"/>
    </location>
</feature>
<feature type="sequence conflict" description="In Ref. 1; CAA73939." evidence="4" ref="1">
    <original>EALAAVH</original>
    <variation>QVAAAWT</variation>
    <location>
        <begin position="155"/>
        <end position="161"/>
    </location>
</feature>
<feature type="sequence conflict" description="In Ref. 1; CAA73939." evidence="4" ref="1">
    <original>A</original>
    <variation>R</variation>
    <location>
        <position position="183"/>
    </location>
</feature>
<feature type="sequence conflict" description="In Ref. 1; CAA73939." evidence="4" ref="1">
    <original>E</original>
    <variation>V</variation>
    <location>
        <position position="196"/>
    </location>
</feature>
<feature type="sequence conflict" description="In Ref. 3; AAA31108." evidence="4" ref="3">
    <original>R</original>
    <variation>S</variation>
    <location>
        <position position="259"/>
    </location>
</feature>
<feature type="sequence conflict" description="In Ref. 1; CAA73939." evidence="4" ref="1">
    <original>V</original>
    <variation>F</variation>
    <location>
        <position position="260"/>
    </location>
</feature>
<feature type="sequence conflict" description="In Ref. 3." evidence="4" ref="3">
    <original>R</original>
    <variation>H</variation>
    <location>
        <position position="265"/>
    </location>
</feature>
<sequence>MSCQPFTSADTFIPLNSESSATLPLIMHHSAAECLPASNHATNVMSTATGLHYSVPSCHYGNQPSTYGVMAGSLTPCLYKFPDHTLSHGFPPMYQPLLPEDPTAADFKQELRRKSKLVEEPIDMDSPEIRELEKFPNEFKVRRIKLGYTQTNVGEALAAVHGSEFSQTTICRFENLQLSFKNACKLKAILSKWLEEAEQVGALYNEKVGANERKRKRRTTISIAAKDALERHFGEQNKPSSQEILRMAEELNLEKEVVRVWFCNRRQREKRVKTSLNQSLFTISKEHLECR</sequence>